<reference key="1">
    <citation type="journal article" date="2009" name="Nature">
        <title>Evolution of pathogenicity and sexual reproduction in eight Candida genomes.</title>
        <authorList>
            <person name="Butler G."/>
            <person name="Rasmussen M.D."/>
            <person name="Lin M.F."/>
            <person name="Santos M.A.S."/>
            <person name="Sakthikumar S."/>
            <person name="Munro C.A."/>
            <person name="Rheinbay E."/>
            <person name="Grabherr M."/>
            <person name="Forche A."/>
            <person name="Reedy J.L."/>
            <person name="Agrafioti I."/>
            <person name="Arnaud M.B."/>
            <person name="Bates S."/>
            <person name="Brown A.J.P."/>
            <person name="Brunke S."/>
            <person name="Costanzo M.C."/>
            <person name="Fitzpatrick D.A."/>
            <person name="de Groot P.W.J."/>
            <person name="Harris D."/>
            <person name="Hoyer L.L."/>
            <person name="Hube B."/>
            <person name="Klis F.M."/>
            <person name="Kodira C."/>
            <person name="Lennard N."/>
            <person name="Logue M.E."/>
            <person name="Martin R."/>
            <person name="Neiman A.M."/>
            <person name="Nikolaou E."/>
            <person name="Quail M.A."/>
            <person name="Quinn J."/>
            <person name="Santos M.C."/>
            <person name="Schmitzberger F.F."/>
            <person name="Sherlock G."/>
            <person name="Shah P."/>
            <person name="Silverstein K.A.T."/>
            <person name="Skrzypek M.S."/>
            <person name="Soll D."/>
            <person name="Staggs R."/>
            <person name="Stansfield I."/>
            <person name="Stumpf M.P.H."/>
            <person name="Sudbery P.E."/>
            <person name="Srikantha T."/>
            <person name="Zeng Q."/>
            <person name="Berman J."/>
            <person name="Berriman M."/>
            <person name="Heitman J."/>
            <person name="Gow N.A.R."/>
            <person name="Lorenz M.C."/>
            <person name="Birren B.W."/>
            <person name="Kellis M."/>
            <person name="Cuomo C.A."/>
        </authorList>
    </citation>
    <scope>NUCLEOTIDE SEQUENCE [LARGE SCALE GENOMIC DNA]</scope>
    <source>
        <strain>ATCC 6260 / CBS 566 / DSM 6381 / JCM 1539 / NBRC 10279 / NRRL Y-324</strain>
    </source>
</reference>
<feature type="chain" id="PRO_0000320359" description="Pro-apoptotic serine protease NMA111">
    <location>
        <begin position="1"/>
        <end position="991"/>
    </location>
</feature>
<feature type="domain" description="PDZ 1" evidence="3">
    <location>
        <begin position="296"/>
        <end position="374"/>
    </location>
</feature>
<feature type="domain" description="PDZ 2" evidence="3">
    <location>
        <begin position="885"/>
        <end position="957"/>
    </location>
</feature>
<feature type="region of interest" description="Disordered" evidence="4">
    <location>
        <begin position="1"/>
        <end position="57"/>
    </location>
</feature>
<feature type="region of interest" description="Serine protease">
    <location>
        <begin position="86"/>
        <end position="269"/>
    </location>
</feature>
<feature type="compositionally biased region" description="Acidic residues" evidence="4">
    <location>
        <begin position="38"/>
        <end position="50"/>
    </location>
</feature>
<feature type="active site" description="Charge relay system" evidence="2">
    <location>
        <position position="117"/>
    </location>
</feature>
<feature type="active site" description="Charge relay system" evidence="2">
    <location>
        <position position="148"/>
    </location>
</feature>
<feature type="active site" description="Charge relay system" evidence="2">
    <location>
        <position position="231"/>
    </location>
</feature>
<accession>A5DAL3</accession>
<protein>
    <recommendedName>
        <fullName>Pro-apoptotic serine protease NMA111</fullName>
        <ecNumber>3.4.21.-</ecNumber>
    </recommendedName>
</protein>
<keyword id="KW-0053">Apoptosis</keyword>
<keyword id="KW-0378">Hydrolase</keyword>
<keyword id="KW-0539">Nucleus</keyword>
<keyword id="KW-0645">Protease</keyword>
<keyword id="KW-1185">Reference proteome</keyword>
<keyword id="KW-0677">Repeat</keyword>
<keyword id="KW-0720">Serine protease</keyword>
<organism>
    <name type="scientific">Meyerozyma guilliermondii (strain ATCC 6260 / CBS 566 / DSM 6381 / JCM 1539 / NBRC 10279 / NRRL Y-324)</name>
    <name type="common">Yeast</name>
    <name type="synonym">Candida guilliermondii</name>
    <dbReference type="NCBI Taxonomy" id="294746"/>
    <lineage>
        <taxon>Eukaryota</taxon>
        <taxon>Fungi</taxon>
        <taxon>Dikarya</taxon>
        <taxon>Ascomycota</taxon>
        <taxon>Saccharomycotina</taxon>
        <taxon>Pichiomycetes</taxon>
        <taxon>Debaryomycetaceae</taxon>
        <taxon>Meyerozyma</taxon>
    </lineage>
</organism>
<proteinExistence type="inferred from homology"/>
<sequence>MTVGKRKLSNGTVNEAKRLDDHVPVVAPSTNPDFENANGEDNEDIDDYSSEGEMSPQLENYFPQTTSWQKTITKVVKSVVSIQFSHVSNFDTESSAVSEATGFVVDSERGYILTNRHVVGPGPFCGYVVFDNHEEAVVRPIYRDPIHDFGFLQFDPKDIRYMKIEQLDLRPDLAQVGTEIRVVGNDAGEKLSILAGFISRLDRNAPDYGTLSYNDFNTEYIQAAASASGGSSGSPVVNKEGYAVALQAGGSTEASTDFFLPVYRPLRALQCIQQGQTITRGDIQVEWQLKPFDECRRLGLTPEAEAAARSQFPDKIGLLVAELVLPEGPADGKLKEGDTLISINGTPIASFISVDEILDEQVGQSLKFVIQRNGHEVSFDIVVGDLHSITPSRYVDIAGASFNDLSYQVARCFCIPVRGVFINDGSGSFELSPFEKNGWLLEYVDDKPTPNLDAFVEVMKSIPDRKKVSISYRHVSDFHTENITVIYVERHWQSTFRMAVRNDSTGIWDFTDIQDKPLPAEEPVPQNAKYIDIPFDDPEKSGCSQLTRSFVQVRTIAPVPVDSYPYRREIGYGVVVDAANGYVLVSRRFVPHDMCDIFVIFAESVELPGKVVFLHPNQNYAIVKYDPKLMLADVKTPKFSDKPLKRGERAFFVGYNYNLRVVTDDVKVSSVSSINVPVASLSPRYRGTNLECILLDSKLSQECDSGVLADYDGTLRAFWITYLGETNCDQTNDRVYRMGLDVTDVMSVIKSLHENKVPAGLRILDAEFASMTIFQGRLRGVPQEWISKFEEVCEDEMKFLAVDRVSAPALGQVATPLKTGDIVMSVNGSIVKTMRDLGIMYNQDSLDFVVIRQKKELHLNVPTIDTSTLNTSHVVFWCGSILQAPHHGVRQLIEKIPSEIYVTKKNSGGPANQYGIATNSFITHVNDTETKTLESFVSVVKGIPDNTYIKLRLVSFDSIPVAISVKTNYHYFPTFELKKVNGEWEETEHKV</sequence>
<comment type="function">
    <text evidence="1">Nuclear serine protease which mediates apoptosis.</text>
</comment>
<comment type="subcellular location">
    <subcellularLocation>
        <location evidence="1">Nucleus</location>
    </subcellularLocation>
</comment>
<comment type="similarity">
    <text evidence="5">Belongs to the peptidase S1C family.</text>
</comment>
<gene>
    <name type="primary">NMA111</name>
    <name type="ORF">PGUG_00318</name>
</gene>
<name>NM111_PICGU</name>
<evidence type="ECO:0000250" key="1"/>
<evidence type="ECO:0000255" key="2"/>
<evidence type="ECO:0000255" key="3">
    <source>
        <dbReference type="PROSITE-ProRule" id="PRU00143"/>
    </source>
</evidence>
<evidence type="ECO:0000256" key="4">
    <source>
        <dbReference type="SAM" id="MobiDB-lite"/>
    </source>
</evidence>
<evidence type="ECO:0000305" key="5"/>
<dbReference type="EC" id="3.4.21.-"/>
<dbReference type="EMBL" id="CH408155">
    <property type="protein sequence ID" value="EDK36220.2"/>
    <property type="molecule type" value="Genomic_DNA"/>
</dbReference>
<dbReference type="RefSeq" id="XP_001486941.1">
    <property type="nucleotide sequence ID" value="XM_001486891.1"/>
</dbReference>
<dbReference type="SMR" id="A5DAL3"/>
<dbReference type="FunCoup" id="A5DAL3">
    <property type="interactions" value="132"/>
</dbReference>
<dbReference type="STRING" id="294746.A5DAL3"/>
<dbReference type="GeneID" id="5128985"/>
<dbReference type="KEGG" id="pgu:PGUG_00318"/>
<dbReference type="VEuPathDB" id="FungiDB:PGUG_00318"/>
<dbReference type="eggNOG" id="KOG1421">
    <property type="taxonomic scope" value="Eukaryota"/>
</dbReference>
<dbReference type="HOGENOM" id="CLU_003212_0_0_1"/>
<dbReference type="InParanoid" id="A5DAL3"/>
<dbReference type="OMA" id="FWGHCVF"/>
<dbReference type="OrthoDB" id="4217619at2759"/>
<dbReference type="Proteomes" id="UP000001997">
    <property type="component" value="Unassembled WGS sequence"/>
</dbReference>
<dbReference type="GO" id="GO:0005634">
    <property type="term" value="C:nucleus"/>
    <property type="evidence" value="ECO:0007669"/>
    <property type="project" value="UniProtKB-SubCell"/>
</dbReference>
<dbReference type="GO" id="GO:0004252">
    <property type="term" value="F:serine-type endopeptidase activity"/>
    <property type="evidence" value="ECO:0007669"/>
    <property type="project" value="EnsemblFungi"/>
</dbReference>
<dbReference type="GO" id="GO:0006915">
    <property type="term" value="P:apoptotic process"/>
    <property type="evidence" value="ECO:0007669"/>
    <property type="project" value="UniProtKB-KW"/>
</dbReference>
<dbReference type="GO" id="GO:0034605">
    <property type="term" value="P:cellular response to heat"/>
    <property type="evidence" value="ECO:0007669"/>
    <property type="project" value="EnsemblFungi"/>
</dbReference>
<dbReference type="GO" id="GO:0006629">
    <property type="term" value="P:lipid metabolic process"/>
    <property type="evidence" value="ECO:0007669"/>
    <property type="project" value="EnsemblFungi"/>
</dbReference>
<dbReference type="GO" id="GO:0120174">
    <property type="term" value="P:stress-induced homeostatically regulated protein degradation pathway"/>
    <property type="evidence" value="ECO:0007669"/>
    <property type="project" value="EnsemblFungi"/>
</dbReference>
<dbReference type="CDD" id="cd06786">
    <property type="entry name" value="cpPDZ1_ScNma111-like"/>
    <property type="match status" value="1"/>
</dbReference>
<dbReference type="CDD" id="cd10827">
    <property type="entry name" value="cpPDZ3_ScNma111-like"/>
    <property type="match status" value="1"/>
</dbReference>
<dbReference type="CDD" id="cd06719">
    <property type="entry name" value="PDZ2-4_Nma111p-like"/>
    <property type="match status" value="1"/>
</dbReference>
<dbReference type="Gene3D" id="2.30.42.10">
    <property type="match status" value="1"/>
</dbReference>
<dbReference type="Gene3D" id="2.40.10.120">
    <property type="match status" value="2"/>
</dbReference>
<dbReference type="InterPro" id="IPR001478">
    <property type="entry name" value="PDZ"/>
</dbReference>
<dbReference type="InterPro" id="IPR025926">
    <property type="entry name" value="PDZ-like_dom"/>
</dbReference>
<dbReference type="InterPro" id="IPR041489">
    <property type="entry name" value="PDZ_6"/>
</dbReference>
<dbReference type="InterPro" id="IPR036034">
    <property type="entry name" value="PDZ_sf"/>
</dbReference>
<dbReference type="InterPro" id="IPR009003">
    <property type="entry name" value="Peptidase_S1_PA"/>
</dbReference>
<dbReference type="InterPro" id="IPR001940">
    <property type="entry name" value="Peptidase_S1C"/>
</dbReference>
<dbReference type="PANTHER" id="PTHR46366">
    <property type="entry name" value="PRO-APOPTOTIC SERINE PROTEASE NMA111"/>
    <property type="match status" value="1"/>
</dbReference>
<dbReference type="PANTHER" id="PTHR46366:SF8">
    <property type="entry name" value="PRO-APOPTOTIC SERINE PROTEASE NMA111"/>
    <property type="match status" value="1"/>
</dbReference>
<dbReference type="Pfam" id="PF12812">
    <property type="entry name" value="PDZ_1"/>
    <property type="match status" value="2"/>
</dbReference>
<dbReference type="Pfam" id="PF17820">
    <property type="entry name" value="PDZ_6"/>
    <property type="match status" value="1"/>
</dbReference>
<dbReference type="Pfam" id="PF13365">
    <property type="entry name" value="Trypsin_2"/>
    <property type="match status" value="1"/>
</dbReference>
<dbReference type="PRINTS" id="PR00834">
    <property type="entry name" value="PROTEASES2C"/>
</dbReference>
<dbReference type="SMART" id="SM00228">
    <property type="entry name" value="PDZ"/>
    <property type="match status" value="2"/>
</dbReference>
<dbReference type="SUPFAM" id="SSF50156">
    <property type="entry name" value="PDZ domain-like"/>
    <property type="match status" value="3"/>
</dbReference>
<dbReference type="SUPFAM" id="SSF50494">
    <property type="entry name" value="Trypsin-like serine proteases"/>
    <property type="match status" value="2"/>
</dbReference>
<dbReference type="PROSITE" id="PS50106">
    <property type="entry name" value="PDZ"/>
    <property type="match status" value="1"/>
</dbReference>